<keyword id="KW-1185">Reference proteome</keyword>
<keyword id="KW-0687">Ribonucleoprotein</keyword>
<keyword id="KW-0689">Ribosomal protein</keyword>
<keyword id="KW-0694">RNA-binding</keyword>
<keyword id="KW-0699">rRNA-binding</keyword>
<comment type="function">
    <text evidence="1">Forms part of the ribosomal stalk, playing a central role in the interaction of the ribosome with GTP-bound translation factors.</text>
</comment>
<comment type="subunit">
    <text evidence="1">Part of the ribosomal stalk of the 50S ribosomal subunit. The N-terminus interacts with L11 and the large rRNA to form the base of the stalk. The C-terminus forms an elongated spine to which L12 dimers bind in a sequential fashion forming a multimeric L10(L12)X complex.</text>
</comment>
<comment type="similarity">
    <text evidence="1">Belongs to the universal ribosomal protein uL10 family.</text>
</comment>
<sequence length="175" mass="18673">MGRTLESKQQIVEELKKLLGEAEMALVLDYQGLSIKEMSDLRTRLQASNGVCKVTKNTLMRRAIDGDSVWSSLDSLLNGTNAFVLIKGDVGGAVKAVQSFQKETKKSETKGGLFEGKLLSQDEIKAIGELPSKEVLMAQIAGAINAVTTKVAVGVNEVPSGLARALKQHADSGES</sequence>
<dbReference type="EMBL" id="CP000435">
    <property type="protein sequence ID" value="ABI47462.1"/>
    <property type="molecule type" value="Genomic_DNA"/>
</dbReference>
<dbReference type="RefSeq" id="WP_011620617.1">
    <property type="nucleotide sequence ID" value="NC_008319.1"/>
</dbReference>
<dbReference type="SMR" id="Q0I6K9"/>
<dbReference type="STRING" id="64471.sync_2725"/>
<dbReference type="KEGG" id="syg:sync_2725"/>
<dbReference type="eggNOG" id="COG0244">
    <property type="taxonomic scope" value="Bacteria"/>
</dbReference>
<dbReference type="HOGENOM" id="CLU_092227_1_1_3"/>
<dbReference type="OrthoDB" id="9808307at2"/>
<dbReference type="Proteomes" id="UP000001961">
    <property type="component" value="Chromosome"/>
</dbReference>
<dbReference type="GO" id="GO:1990904">
    <property type="term" value="C:ribonucleoprotein complex"/>
    <property type="evidence" value="ECO:0007669"/>
    <property type="project" value="UniProtKB-KW"/>
</dbReference>
<dbReference type="GO" id="GO:0005840">
    <property type="term" value="C:ribosome"/>
    <property type="evidence" value="ECO:0007669"/>
    <property type="project" value="UniProtKB-KW"/>
</dbReference>
<dbReference type="GO" id="GO:0070180">
    <property type="term" value="F:large ribosomal subunit rRNA binding"/>
    <property type="evidence" value="ECO:0007669"/>
    <property type="project" value="UniProtKB-UniRule"/>
</dbReference>
<dbReference type="GO" id="GO:0006412">
    <property type="term" value="P:translation"/>
    <property type="evidence" value="ECO:0007669"/>
    <property type="project" value="UniProtKB-UniRule"/>
</dbReference>
<dbReference type="CDD" id="cd05797">
    <property type="entry name" value="Ribosomal_L10"/>
    <property type="match status" value="1"/>
</dbReference>
<dbReference type="Gene3D" id="3.30.70.1730">
    <property type="match status" value="1"/>
</dbReference>
<dbReference type="Gene3D" id="6.10.250.290">
    <property type="match status" value="1"/>
</dbReference>
<dbReference type="HAMAP" id="MF_00362">
    <property type="entry name" value="Ribosomal_uL10"/>
    <property type="match status" value="1"/>
</dbReference>
<dbReference type="InterPro" id="IPR001790">
    <property type="entry name" value="Ribosomal_uL10"/>
</dbReference>
<dbReference type="InterPro" id="IPR043141">
    <property type="entry name" value="Ribosomal_uL10-like_sf"/>
</dbReference>
<dbReference type="InterPro" id="IPR022973">
    <property type="entry name" value="Ribosomal_uL10_bac"/>
</dbReference>
<dbReference type="InterPro" id="IPR047865">
    <property type="entry name" value="Ribosomal_uL10_bac_type"/>
</dbReference>
<dbReference type="NCBIfam" id="NF000955">
    <property type="entry name" value="PRK00099.1-1"/>
    <property type="match status" value="1"/>
</dbReference>
<dbReference type="PANTHER" id="PTHR11560">
    <property type="entry name" value="39S RIBOSOMAL PROTEIN L10, MITOCHONDRIAL"/>
    <property type="match status" value="1"/>
</dbReference>
<dbReference type="Pfam" id="PF00466">
    <property type="entry name" value="Ribosomal_L10"/>
    <property type="match status" value="1"/>
</dbReference>
<dbReference type="SUPFAM" id="SSF160369">
    <property type="entry name" value="Ribosomal protein L10-like"/>
    <property type="match status" value="1"/>
</dbReference>
<proteinExistence type="inferred from homology"/>
<protein>
    <recommendedName>
        <fullName evidence="1">Large ribosomal subunit protein uL10</fullName>
    </recommendedName>
    <alternativeName>
        <fullName evidence="2">50S ribosomal protein L10</fullName>
    </alternativeName>
</protein>
<name>RL10_SYNS3</name>
<feature type="chain" id="PRO_1000005612" description="Large ribosomal subunit protein uL10">
    <location>
        <begin position="1"/>
        <end position="175"/>
    </location>
</feature>
<accession>Q0I6K9</accession>
<organism>
    <name type="scientific">Synechococcus sp. (strain CC9311)</name>
    <dbReference type="NCBI Taxonomy" id="64471"/>
    <lineage>
        <taxon>Bacteria</taxon>
        <taxon>Bacillati</taxon>
        <taxon>Cyanobacteriota</taxon>
        <taxon>Cyanophyceae</taxon>
        <taxon>Synechococcales</taxon>
        <taxon>Synechococcaceae</taxon>
        <taxon>Synechococcus</taxon>
    </lineage>
</organism>
<gene>
    <name evidence="1" type="primary">rplJ</name>
    <name evidence="1" type="synonym">rpl10</name>
    <name type="ordered locus">sync_2725</name>
</gene>
<reference key="1">
    <citation type="journal article" date="2006" name="Proc. Natl. Acad. Sci. U.S.A.">
        <title>Genome sequence of Synechococcus CC9311: insights into adaptation to a coastal environment.</title>
        <authorList>
            <person name="Palenik B."/>
            <person name="Ren Q."/>
            <person name="Dupont C.L."/>
            <person name="Myers G.S."/>
            <person name="Heidelberg J.F."/>
            <person name="Badger J.H."/>
            <person name="Madupu R."/>
            <person name="Nelson W.C."/>
            <person name="Brinkac L.M."/>
            <person name="Dodson R.J."/>
            <person name="Durkin A.S."/>
            <person name="Daugherty S.C."/>
            <person name="Sullivan S.A."/>
            <person name="Khouri H."/>
            <person name="Mohamoud Y."/>
            <person name="Halpin R."/>
            <person name="Paulsen I.T."/>
        </authorList>
    </citation>
    <scope>NUCLEOTIDE SEQUENCE [LARGE SCALE GENOMIC DNA]</scope>
    <source>
        <strain>CC9311</strain>
    </source>
</reference>
<evidence type="ECO:0000255" key="1">
    <source>
        <dbReference type="HAMAP-Rule" id="MF_00362"/>
    </source>
</evidence>
<evidence type="ECO:0000305" key="2"/>